<gene>
    <name evidence="1" type="primary">xerD</name>
    <name type="ordered locus">lmo1955</name>
</gene>
<feature type="chain" id="PRO_0000095396" description="Tyrosine recombinase XerD">
    <location>
        <begin position="1"/>
        <end position="297"/>
    </location>
</feature>
<feature type="domain" description="Core-binding (CB)" evidence="3">
    <location>
        <begin position="1"/>
        <end position="86"/>
    </location>
</feature>
<feature type="domain" description="Tyr recombinase" evidence="2">
    <location>
        <begin position="107"/>
        <end position="291"/>
    </location>
</feature>
<feature type="active site" evidence="1">
    <location>
        <position position="147"/>
    </location>
</feature>
<feature type="active site" evidence="1">
    <location>
        <position position="171"/>
    </location>
</feature>
<feature type="active site" evidence="1">
    <location>
        <position position="243"/>
    </location>
</feature>
<feature type="active site" evidence="1">
    <location>
        <position position="246"/>
    </location>
</feature>
<feature type="active site" evidence="1">
    <location>
        <position position="269"/>
    </location>
</feature>
<feature type="active site" description="O-(3'-phospho-DNA)-tyrosine intermediate" evidence="1">
    <location>
        <position position="278"/>
    </location>
</feature>
<protein>
    <recommendedName>
        <fullName evidence="1">Tyrosine recombinase XerD</fullName>
    </recommendedName>
</protein>
<sequence>MNDLIEDFLHFLIVERGLSANTIKAYERDLHYFVSYMDVTKELTDPNTLERSDIVGFMAFARQEGKSPRSVARYIASLRSFFHYLMHDGKMSHDPMIQIETPKQAQGLPKVLNLDDVEKLLSSSDTSTPLGLRDQAMMEILYATGLRVTELVSLKMDDLHLHMGFIQTIGKGDKERIIPLGKTATTVLEKYLEEARPKLRRPKYRNDFVFLNHHGQGLTRQGFWKILKGIAKESGIEKPITPHTLRHSFATHLLENGADLRSVQELLGHADISTTQIYTHVTKLRLKDVYKQFHPRA</sequence>
<comment type="function">
    <text evidence="1">Site-specific tyrosine recombinase, which acts by catalyzing the cutting and rejoining of the recombining DNA molecules. The XerC-XerD complex is essential to convert dimers of the bacterial chromosome into monomers to permit their segregation at cell division. It also contributes to the segregational stability of plasmids.</text>
</comment>
<comment type="subunit">
    <text evidence="1">Forms a cyclic heterotetrameric complex composed of two molecules of XerC and two molecules of XerD.</text>
</comment>
<comment type="subcellular location">
    <subcellularLocation>
        <location evidence="1">Cytoplasm</location>
    </subcellularLocation>
</comment>
<comment type="similarity">
    <text evidence="1">Belongs to the 'phage' integrase family. XerD subfamily.</text>
</comment>
<accession>Q8Y5V0</accession>
<reference key="1">
    <citation type="journal article" date="2001" name="Science">
        <title>Comparative genomics of Listeria species.</title>
        <authorList>
            <person name="Glaser P."/>
            <person name="Frangeul L."/>
            <person name="Buchrieser C."/>
            <person name="Rusniok C."/>
            <person name="Amend A."/>
            <person name="Baquero F."/>
            <person name="Berche P."/>
            <person name="Bloecker H."/>
            <person name="Brandt P."/>
            <person name="Chakraborty T."/>
            <person name="Charbit A."/>
            <person name="Chetouani F."/>
            <person name="Couve E."/>
            <person name="de Daruvar A."/>
            <person name="Dehoux P."/>
            <person name="Domann E."/>
            <person name="Dominguez-Bernal G."/>
            <person name="Duchaud E."/>
            <person name="Durant L."/>
            <person name="Dussurget O."/>
            <person name="Entian K.-D."/>
            <person name="Fsihi H."/>
            <person name="Garcia-del Portillo F."/>
            <person name="Garrido P."/>
            <person name="Gautier L."/>
            <person name="Goebel W."/>
            <person name="Gomez-Lopez N."/>
            <person name="Hain T."/>
            <person name="Hauf J."/>
            <person name="Jackson D."/>
            <person name="Jones L.-M."/>
            <person name="Kaerst U."/>
            <person name="Kreft J."/>
            <person name="Kuhn M."/>
            <person name="Kunst F."/>
            <person name="Kurapkat G."/>
            <person name="Madueno E."/>
            <person name="Maitournam A."/>
            <person name="Mata Vicente J."/>
            <person name="Ng E."/>
            <person name="Nedjari H."/>
            <person name="Nordsiek G."/>
            <person name="Novella S."/>
            <person name="de Pablos B."/>
            <person name="Perez-Diaz J.-C."/>
            <person name="Purcell R."/>
            <person name="Remmel B."/>
            <person name="Rose M."/>
            <person name="Schlueter T."/>
            <person name="Simoes N."/>
            <person name="Tierrez A."/>
            <person name="Vazquez-Boland J.-A."/>
            <person name="Voss H."/>
            <person name="Wehland J."/>
            <person name="Cossart P."/>
        </authorList>
    </citation>
    <scope>NUCLEOTIDE SEQUENCE [LARGE SCALE GENOMIC DNA]</scope>
    <source>
        <strain>ATCC BAA-679 / EGD-e</strain>
    </source>
</reference>
<keyword id="KW-0131">Cell cycle</keyword>
<keyword id="KW-0132">Cell division</keyword>
<keyword id="KW-0159">Chromosome partition</keyword>
<keyword id="KW-0963">Cytoplasm</keyword>
<keyword id="KW-0229">DNA integration</keyword>
<keyword id="KW-0233">DNA recombination</keyword>
<keyword id="KW-0238">DNA-binding</keyword>
<keyword id="KW-1185">Reference proteome</keyword>
<dbReference type="EMBL" id="AL591981">
    <property type="protein sequence ID" value="CAD00033.1"/>
    <property type="molecule type" value="Genomic_DNA"/>
</dbReference>
<dbReference type="PIR" id="AC1319">
    <property type="entry name" value="AC1319"/>
</dbReference>
<dbReference type="RefSeq" id="NP_465479.1">
    <property type="nucleotide sequence ID" value="NC_003210.1"/>
</dbReference>
<dbReference type="RefSeq" id="WP_003723602.1">
    <property type="nucleotide sequence ID" value="NZ_CP149495.1"/>
</dbReference>
<dbReference type="SMR" id="Q8Y5V0"/>
<dbReference type="STRING" id="169963.gene:17594640"/>
<dbReference type="PaxDb" id="169963-lmo1955"/>
<dbReference type="EnsemblBacteria" id="CAD00033">
    <property type="protein sequence ID" value="CAD00033"/>
    <property type="gene ID" value="CAD00033"/>
</dbReference>
<dbReference type="GeneID" id="987975"/>
<dbReference type="KEGG" id="lmo:lmo1955"/>
<dbReference type="PATRIC" id="fig|169963.11.peg.2002"/>
<dbReference type="eggNOG" id="COG4974">
    <property type="taxonomic scope" value="Bacteria"/>
</dbReference>
<dbReference type="HOGENOM" id="CLU_027562_9_6_9"/>
<dbReference type="OrthoDB" id="9801717at2"/>
<dbReference type="PhylomeDB" id="Q8Y5V0"/>
<dbReference type="BioCyc" id="LMON169963:LMO1955-MONOMER"/>
<dbReference type="Proteomes" id="UP000000817">
    <property type="component" value="Chromosome"/>
</dbReference>
<dbReference type="GO" id="GO:0005737">
    <property type="term" value="C:cytoplasm"/>
    <property type="evidence" value="ECO:0007669"/>
    <property type="project" value="UniProtKB-SubCell"/>
</dbReference>
<dbReference type="GO" id="GO:0048476">
    <property type="term" value="C:Holliday junction resolvase complex"/>
    <property type="evidence" value="ECO:0000318"/>
    <property type="project" value="GO_Central"/>
</dbReference>
<dbReference type="GO" id="GO:0003677">
    <property type="term" value="F:DNA binding"/>
    <property type="evidence" value="ECO:0000318"/>
    <property type="project" value="GO_Central"/>
</dbReference>
<dbReference type="GO" id="GO:0009037">
    <property type="term" value="F:tyrosine-based site-specific recombinase activity"/>
    <property type="evidence" value="ECO:0000318"/>
    <property type="project" value="GO_Central"/>
</dbReference>
<dbReference type="GO" id="GO:0051301">
    <property type="term" value="P:cell division"/>
    <property type="evidence" value="ECO:0007669"/>
    <property type="project" value="UniProtKB-KW"/>
</dbReference>
<dbReference type="GO" id="GO:0007059">
    <property type="term" value="P:chromosome segregation"/>
    <property type="evidence" value="ECO:0000318"/>
    <property type="project" value="GO_Central"/>
</dbReference>
<dbReference type="GO" id="GO:0006310">
    <property type="term" value="P:DNA recombination"/>
    <property type="evidence" value="ECO:0000318"/>
    <property type="project" value="GO_Central"/>
</dbReference>
<dbReference type="GO" id="GO:0006313">
    <property type="term" value="P:DNA transposition"/>
    <property type="evidence" value="ECO:0007669"/>
    <property type="project" value="UniProtKB-UniRule"/>
</dbReference>
<dbReference type="GO" id="GO:0071139">
    <property type="term" value="P:resolution of DNA recombination intermediates"/>
    <property type="evidence" value="ECO:0000318"/>
    <property type="project" value="GO_Central"/>
</dbReference>
<dbReference type="CDD" id="cd00798">
    <property type="entry name" value="INT_XerDC_C"/>
    <property type="match status" value="1"/>
</dbReference>
<dbReference type="Gene3D" id="1.10.150.130">
    <property type="match status" value="1"/>
</dbReference>
<dbReference type="Gene3D" id="1.10.443.10">
    <property type="entry name" value="Intergrase catalytic core"/>
    <property type="match status" value="1"/>
</dbReference>
<dbReference type="HAMAP" id="MF_01808">
    <property type="entry name" value="Recomb_XerC_XerD"/>
    <property type="match status" value="1"/>
</dbReference>
<dbReference type="HAMAP" id="MF_01807">
    <property type="entry name" value="Recomb_XerD"/>
    <property type="match status" value="1"/>
</dbReference>
<dbReference type="InterPro" id="IPR044068">
    <property type="entry name" value="CB"/>
</dbReference>
<dbReference type="InterPro" id="IPR011010">
    <property type="entry name" value="DNA_brk_join_enz"/>
</dbReference>
<dbReference type="InterPro" id="IPR013762">
    <property type="entry name" value="Integrase-like_cat_sf"/>
</dbReference>
<dbReference type="InterPro" id="IPR002104">
    <property type="entry name" value="Integrase_catalytic"/>
</dbReference>
<dbReference type="InterPro" id="IPR010998">
    <property type="entry name" value="Integrase_recombinase_N"/>
</dbReference>
<dbReference type="InterPro" id="IPR004107">
    <property type="entry name" value="Integrase_SAM-like_N"/>
</dbReference>
<dbReference type="InterPro" id="IPR011932">
    <property type="entry name" value="Recomb_XerD"/>
</dbReference>
<dbReference type="InterPro" id="IPR023009">
    <property type="entry name" value="Tyrosine_recombinase_XerC/XerD"/>
</dbReference>
<dbReference type="InterPro" id="IPR050090">
    <property type="entry name" value="Tyrosine_recombinase_XerCD"/>
</dbReference>
<dbReference type="NCBIfam" id="NF001399">
    <property type="entry name" value="PRK00283.1"/>
    <property type="match status" value="1"/>
</dbReference>
<dbReference type="NCBIfam" id="NF040815">
    <property type="entry name" value="recomb_XerA_Arch"/>
    <property type="match status" value="1"/>
</dbReference>
<dbReference type="NCBIfam" id="TIGR02225">
    <property type="entry name" value="recomb_XerD"/>
    <property type="match status" value="1"/>
</dbReference>
<dbReference type="PANTHER" id="PTHR30349">
    <property type="entry name" value="PHAGE INTEGRASE-RELATED"/>
    <property type="match status" value="1"/>
</dbReference>
<dbReference type="PANTHER" id="PTHR30349:SF81">
    <property type="entry name" value="TYROSINE RECOMBINASE XERC"/>
    <property type="match status" value="1"/>
</dbReference>
<dbReference type="Pfam" id="PF02899">
    <property type="entry name" value="Phage_int_SAM_1"/>
    <property type="match status" value="1"/>
</dbReference>
<dbReference type="Pfam" id="PF00589">
    <property type="entry name" value="Phage_integrase"/>
    <property type="match status" value="1"/>
</dbReference>
<dbReference type="SUPFAM" id="SSF56349">
    <property type="entry name" value="DNA breaking-rejoining enzymes"/>
    <property type="match status" value="1"/>
</dbReference>
<dbReference type="PROSITE" id="PS51900">
    <property type="entry name" value="CB"/>
    <property type="match status" value="1"/>
</dbReference>
<dbReference type="PROSITE" id="PS51898">
    <property type="entry name" value="TYR_RECOMBINASE"/>
    <property type="match status" value="1"/>
</dbReference>
<evidence type="ECO:0000255" key="1">
    <source>
        <dbReference type="HAMAP-Rule" id="MF_01807"/>
    </source>
</evidence>
<evidence type="ECO:0000255" key="2">
    <source>
        <dbReference type="PROSITE-ProRule" id="PRU01246"/>
    </source>
</evidence>
<evidence type="ECO:0000255" key="3">
    <source>
        <dbReference type="PROSITE-ProRule" id="PRU01248"/>
    </source>
</evidence>
<name>XERD_LISMO</name>
<proteinExistence type="inferred from homology"/>
<organism>
    <name type="scientific">Listeria monocytogenes serovar 1/2a (strain ATCC BAA-679 / EGD-e)</name>
    <dbReference type="NCBI Taxonomy" id="169963"/>
    <lineage>
        <taxon>Bacteria</taxon>
        <taxon>Bacillati</taxon>
        <taxon>Bacillota</taxon>
        <taxon>Bacilli</taxon>
        <taxon>Bacillales</taxon>
        <taxon>Listeriaceae</taxon>
        <taxon>Listeria</taxon>
    </lineage>
</organism>